<name>ASTE_SHESW</name>
<feature type="chain" id="PRO_1000017331" description="Succinylglutamate desuccinylase">
    <location>
        <begin position="1"/>
        <end position="344"/>
    </location>
</feature>
<feature type="active site" evidence="1">
    <location>
        <position position="224"/>
    </location>
</feature>
<feature type="binding site" evidence="1">
    <location>
        <position position="63"/>
    </location>
    <ligand>
        <name>Zn(2+)</name>
        <dbReference type="ChEBI" id="CHEBI:29105"/>
    </ligand>
</feature>
<feature type="binding site" evidence="1">
    <location>
        <position position="66"/>
    </location>
    <ligand>
        <name>Zn(2+)</name>
        <dbReference type="ChEBI" id="CHEBI:29105"/>
    </ligand>
</feature>
<feature type="binding site" evidence="1">
    <location>
        <position position="160"/>
    </location>
    <ligand>
        <name>Zn(2+)</name>
        <dbReference type="ChEBI" id="CHEBI:29105"/>
    </ligand>
</feature>
<proteinExistence type="inferred from homology"/>
<dbReference type="EC" id="3.5.1.96" evidence="1"/>
<dbReference type="EMBL" id="CP000503">
    <property type="protein sequence ID" value="ABM24952.1"/>
    <property type="molecule type" value="Genomic_DNA"/>
</dbReference>
<dbReference type="RefSeq" id="WP_011789422.1">
    <property type="nucleotide sequence ID" value="NC_008750.1"/>
</dbReference>
<dbReference type="SMR" id="A1RJV7"/>
<dbReference type="KEGG" id="shw:Sputw3181_2124"/>
<dbReference type="HOGENOM" id="CLU_071608_0_0_6"/>
<dbReference type="UniPathway" id="UPA00185">
    <property type="reaction ID" value="UER00283"/>
</dbReference>
<dbReference type="Proteomes" id="UP000002597">
    <property type="component" value="Chromosome"/>
</dbReference>
<dbReference type="GO" id="GO:0016788">
    <property type="term" value="F:hydrolase activity, acting on ester bonds"/>
    <property type="evidence" value="ECO:0007669"/>
    <property type="project" value="UniProtKB-UniRule"/>
</dbReference>
<dbReference type="GO" id="GO:0009017">
    <property type="term" value="F:succinylglutamate desuccinylase activity"/>
    <property type="evidence" value="ECO:0007669"/>
    <property type="project" value="UniProtKB-EC"/>
</dbReference>
<dbReference type="GO" id="GO:0008270">
    <property type="term" value="F:zinc ion binding"/>
    <property type="evidence" value="ECO:0007669"/>
    <property type="project" value="UniProtKB-UniRule"/>
</dbReference>
<dbReference type="GO" id="GO:0019544">
    <property type="term" value="P:arginine catabolic process to glutamate"/>
    <property type="evidence" value="ECO:0007669"/>
    <property type="project" value="UniProtKB-UniRule"/>
</dbReference>
<dbReference type="GO" id="GO:0019545">
    <property type="term" value="P:arginine catabolic process to succinate"/>
    <property type="evidence" value="ECO:0007669"/>
    <property type="project" value="UniProtKB-UniRule"/>
</dbReference>
<dbReference type="CDD" id="cd03855">
    <property type="entry name" value="M14_ASTE"/>
    <property type="match status" value="1"/>
</dbReference>
<dbReference type="Gene3D" id="3.40.630.10">
    <property type="entry name" value="Zn peptidases"/>
    <property type="match status" value="1"/>
</dbReference>
<dbReference type="HAMAP" id="MF_00767">
    <property type="entry name" value="Arg_catab_AstE"/>
    <property type="match status" value="1"/>
</dbReference>
<dbReference type="InterPro" id="IPR050178">
    <property type="entry name" value="AspA/AstE_fam"/>
</dbReference>
<dbReference type="InterPro" id="IPR055438">
    <property type="entry name" value="AstE_AspA_cat"/>
</dbReference>
<dbReference type="InterPro" id="IPR007036">
    <property type="entry name" value="Aste_AspA_hybrid_dom"/>
</dbReference>
<dbReference type="InterPro" id="IPR016681">
    <property type="entry name" value="SuccinylGlu_desuccinylase"/>
</dbReference>
<dbReference type="NCBIfam" id="TIGR03242">
    <property type="entry name" value="arg_catab_astE"/>
    <property type="match status" value="1"/>
</dbReference>
<dbReference type="NCBIfam" id="NF003706">
    <property type="entry name" value="PRK05324.1"/>
    <property type="match status" value="1"/>
</dbReference>
<dbReference type="PANTHER" id="PTHR15162">
    <property type="entry name" value="ASPARTOACYLASE"/>
    <property type="match status" value="1"/>
</dbReference>
<dbReference type="PANTHER" id="PTHR15162:SF7">
    <property type="entry name" value="SUCCINYLGLUTAMATE DESUCCINYLASE"/>
    <property type="match status" value="1"/>
</dbReference>
<dbReference type="Pfam" id="PF24827">
    <property type="entry name" value="AstE_AspA_cat"/>
    <property type="match status" value="1"/>
</dbReference>
<dbReference type="Pfam" id="PF04952">
    <property type="entry name" value="AstE_AspA_hybrid"/>
    <property type="match status" value="1"/>
</dbReference>
<dbReference type="PIRSF" id="PIRSF017020">
    <property type="entry name" value="AstE"/>
    <property type="match status" value="1"/>
</dbReference>
<dbReference type="SUPFAM" id="SSF53187">
    <property type="entry name" value="Zn-dependent exopeptidases"/>
    <property type="match status" value="1"/>
</dbReference>
<accession>A1RJV7</accession>
<protein>
    <recommendedName>
        <fullName evidence="1">Succinylglutamate desuccinylase</fullName>
        <ecNumber evidence="1">3.5.1.96</ecNumber>
    </recommendedName>
</protein>
<evidence type="ECO:0000255" key="1">
    <source>
        <dbReference type="HAMAP-Rule" id="MF_00767"/>
    </source>
</evidence>
<keyword id="KW-0056">Arginine metabolism</keyword>
<keyword id="KW-0378">Hydrolase</keyword>
<keyword id="KW-0479">Metal-binding</keyword>
<keyword id="KW-0862">Zinc</keyword>
<organism>
    <name type="scientific">Shewanella sp. (strain W3-18-1)</name>
    <dbReference type="NCBI Taxonomy" id="351745"/>
    <lineage>
        <taxon>Bacteria</taxon>
        <taxon>Pseudomonadati</taxon>
        <taxon>Pseudomonadota</taxon>
        <taxon>Gammaproteobacteria</taxon>
        <taxon>Alteromonadales</taxon>
        <taxon>Shewanellaceae</taxon>
        <taxon>Shewanella</taxon>
    </lineage>
</organism>
<gene>
    <name evidence="1" type="primary">astE</name>
    <name type="ordered locus">Sputw3181_2124</name>
</gene>
<reference key="1">
    <citation type="submission" date="2006-12" db="EMBL/GenBank/DDBJ databases">
        <title>Complete sequence of Shewanella sp. W3-18-1.</title>
        <authorList>
            <consortium name="US DOE Joint Genome Institute"/>
            <person name="Copeland A."/>
            <person name="Lucas S."/>
            <person name="Lapidus A."/>
            <person name="Barry K."/>
            <person name="Detter J.C."/>
            <person name="Glavina del Rio T."/>
            <person name="Hammon N."/>
            <person name="Israni S."/>
            <person name="Dalin E."/>
            <person name="Tice H."/>
            <person name="Pitluck S."/>
            <person name="Chain P."/>
            <person name="Malfatti S."/>
            <person name="Shin M."/>
            <person name="Vergez L."/>
            <person name="Schmutz J."/>
            <person name="Larimer F."/>
            <person name="Land M."/>
            <person name="Hauser L."/>
            <person name="Kyrpides N."/>
            <person name="Lykidis A."/>
            <person name="Tiedje J."/>
            <person name="Richardson P."/>
        </authorList>
    </citation>
    <scope>NUCLEOTIDE SEQUENCE [LARGE SCALE GENOMIC DNA]</scope>
    <source>
        <strain>W3-18-1</strain>
    </source>
</reference>
<comment type="function">
    <text evidence="1">Transforms N(2)-succinylglutamate into succinate and glutamate.</text>
</comment>
<comment type="catalytic activity">
    <reaction evidence="1">
        <text>N-succinyl-L-glutamate + H2O = L-glutamate + succinate</text>
        <dbReference type="Rhea" id="RHEA:15169"/>
        <dbReference type="ChEBI" id="CHEBI:15377"/>
        <dbReference type="ChEBI" id="CHEBI:29985"/>
        <dbReference type="ChEBI" id="CHEBI:30031"/>
        <dbReference type="ChEBI" id="CHEBI:58763"/>
        <dbReference type="EC" id="3.5.1.96"/>
    </reaction>
</comment>
<comment type="cofactor">
    <cofactor evidence="1">
        <name>Zn(2+)</name>
        <dbReference type="ChEBI" id="CHEBI:29105"/>
    </cofactor>
    <text evidence="1">Binds 1 zinc ion per subunit.</text>
</comment>
<comment type="pathway">
    <text evidence="1">Amino-acid degradation; L-arginine degradation via AST pathway; L-glutamate and succinate from L-arginine: step 5/5.</text>
</comment>
<comment type="similarity">
    <text evidence="1">Belongs to the AspA/AstE family. Succinylglutamate desuccinylase subfamily.</text>
</comment>
<sequence length="344" mass="38999">MLQALLDSKDFLALTLAHPEQFDGEFSFNLGDHTQVEVWDTGVIVFEPIQNEGKDIVLSCGVHGNETAPIELCNSLIKQLLQQKIIAKQRTLFLIGNPLAINNGTRIIDENMNRLFSGEHSNPPGLVNPERVRAKKLEAYVDRFYTTVADGRQRIHYDLHTAMRASKHEKFAIYPYRPGRAFSGEQIMFLAASGVDTVLFHHEPTTTFSYFSSERYGADAFTIELGKVYPMGQNDMTRFIATHEMFMRLITAKPLELDAFDADKVNLYQVCRVINKHFDDFEFTFATDVENFRSFPKGFVLAREGGKEIKVEHEFESVVFPNAKVPIGNRTVICLIPAVNADVR</sequence>